<keyword id="KW-0521">NADP</keyword>
<keyword id="KW-0560">Oxidoreductase</keyword>
<sequence length="332" mass="36133">MRKPVRIGVLGCASFAWRRMLPAMCDVAETEVVAVASRDPAKAERFAARFECEAVLGYQRLLERPDIDAVYVPLPPGMHAEWIGKALEADKHVLAEKPLTTTASDTARLVGLARRKNLLLRENYLFLHHGRHDVVRDLLQSGEIGELREFTAVFGIPPLPDTDIRYRTELGGGALLDIGVYPARAARHFLLGPLTVLGASSHEAQESGVDLSGSVLLQSEGGTVAHLGYGFVHHYRSAYELWGSRGRIVVDRAFTPPAEWQAVIRIERKGVVDELSLPAEDQVRKAVTAFARDIRAGTGVDDPAVAGDSGESMIQQAALVEAIGQARRCGST</sequence>
<name>SPNN_SACSN</name>
<comment type="function">
    <text evidence="2 3">Involved in the biosynthesis of forosamine ((4-dimethylamino)-2,3,4,6-tetradeoxy-alpha-D-threo-hexopyranose), a highly deoxygenated sugar component of several bioactive natural products such as the insecticidal spinosyns A and D (PubMed:11358695, PubMed:18345667). Catalyzes the reduction of the C-3 keto moiety of dTDP-3,4-diketo-2,6-dideoxy-alpha-D-glucose to yield dTDP-4-keto-2,6-dideoxy-alpha-D-glucose (PubMed:18345667). NADPH is the better reductant, however NADH can also be used (PubMed:18345667).</text>
</comment>
<comment type="catalytic activity">
    <reaction evidence="3">
        <text>dTDP-4-dehydro-2,6-dideoxy-alpha-D-glucose + NADP(+) = dTDP-3,4-didehydro-2,6-dideoxy-alpha-D-glucose + NADPH + H(+)</text>
        <dbReference type="Rhea" id="RHEA:44624"/>
        <dbReference type="ChEBI" id="CHEBI:15378"/>
        <dbReference type="ChEBI" id="CHEBI:57783"/>
        <dbReference type="ChEBI" id="CHEBI:58349"/>
        <dbReference type="ChEBI" id="CHEBI:84537"/>
        <dbReference type="ChEBI" id="CHEBI:84540"/>
        <dbReference type="EC" id="1.1.1.384"/>
    </reaction>
</comment>
<comment type="subunit">
    <text evidence="3">Monomer.</text>
</comment>
<comment type="disruption phenotype">
    <text evidence="2">Cells lacking this gene accumulate the pseudoaglycone (PSA) containing tri-O-methyl rhamnose, but lacking the dimethylamino sugar forosamine.</text>
</comment>
<comment type="similarity">
    <text evidence="6">Belongs to the Gfo/Idh/MocA family.</text>
</comment>
<feature type="chain" id="PRO_0000444243" description="dTDP-3,4-didehydro-2,6-dideoxy-alpha-D-glucose 3-reductase">
    <location>
        <begin position="1"/>
        <end position="332"/>
    </location>
</feature>
<feature type="active site" description="Proton donor" evidence="1">
    <location>
        <position position="97"/>
    </location>
</feature>
<feature type="binding site" evidence="1">
    <location>
        <begin position="12"/>
        <end position="18"/>
    </location>
    <ligand>
        <name>NADP(+)</name>
        <dbReference type="ChEBI" id="CHEBI:58349"/>
    </ligand>
</feature>
<feature type="binding site" evidence="1">
    <location>
        <position position="19"/>
    </location>
    <ligand>
        <name>substrate</name>
    </ligand>
</feature>
<feature type="binding site" evidence="1">
    <location>
        <begin position="37"/>
        <end position="38"/>
    </location>
    <ligand>
        <name>NADP(+)</name>
        <dbReference type="ChEBI" id="CHEBI:58349"/>
    </ligand>
</feature>
<feature type="binding site" evidence="1">
    <location>
        <position position="58"/>
    </location>
    <ligand>
        <name>NADP(+)</name>
        <dbReference type="ChEBI" id="CHEBI:58349"/>
    </ligand>
</feature>
<feature type="binding site" evidence="1">
    <location>
        <position position="74"/>
    </location>
    <ligand>
        <name>NADP(+)</name>
        <dbReference type="ChEBI" id="CHEBI:58349"/>
    </ligand>
</feature>
<feature type="binding site" evidence="1">
    <location>
        <position position="79"/>
    </location>
    <ligand>
        <name>NADP(+)</name>
        <dbReference type="ChEBI" id="CHEBI:58349"/>
    </ligand>
</feature>
<feature type="binding site" evidence="1">
    <location>
        <position position="165"/>
    </location>
    <ligand>
        <name>NADP(+)</name>
        <dbReference type="ChEBI" id="CHEBI:58349"/>
    </ligand>
</feature>
<feature type="binding site" evidence="1">
    <location>
        <position position="177"/>
    </location>
    <ligand>
        <name>NADP(+)</name>
        <dbReference type="ChEBI" id="CHEBI:58349"/>
    </ligand>
</feature>
<feature type="binding site" evidence="1">
    <location>
        <position position="235"/>
    </location>
    <ligand>
        <name>substrate</name>
    </ligand>
</feature>
<feature type="binding site" evidence="1">
    <location>
        <position position="255"/>
    </location>
    <ligand>
        <name>substrate</name>
    </ligand>
</feature>
<dbReference type="EC" id="1.1.1.384" evidence="3"/>
<dbReference type="EMBL" id="AY007564">
    <property type="protein sequence ID" value="AAG23275.1"/>
    <property type="molecule type" value="Genomic_DNA"/>
</dbReference>
<dbReference type="SMR" id="Q9ALN5"/>
<dbReference type="STRING" id="994479.GCA_000194155_04541"/>
<dbReference type="KEGG" id="ag:AAG23275"/>
<dbReference type="BioCyc" id="MetaCyc:MONOMER-16620"/>
<dbReference type="BRENDA" id="1.1.1.384">
    <property type="organism ID" value="13744"/>
</dbReference>
<dbReference type="GO" id="GO:0000166">
    <property type="term" value="F:nucleotide binding"/>
    <property type="evidence" value="ECO:0007669"/>
    <property type="project" value="InterPro"/>
</dbReference>
<dbReference type="GO" id="GO:0016491">
    <property type="term" value="F:oxidoreductase activity"/>
    <property type="evidence" value="ECO:0007669"/>
    <property type="project" value="UniProtKB-KW"/>
</dbReference>
<dbReference type="Gene3D" id="3.30.360.10">
    <property type="entry name" value="Dihydrodipicolinate Reductase, domain 2"/>
    <property type="match status" value="1"/>
</dbReference>
<dbReference type="Gene3D" id="3.40.50.720">
    <property type="entry name" value="NAD(P)-binding Rossmann-like Domain"/>
    <property type="match status" value="1"/>
</dbReference>
<dbReference type="InterPro" id="IPR000683">
    <property type="entry name" value="Gfo/Idh/MocA-like_OxRdtase_N"/>
</dbReference>
<dbReference type="InterPro" id="IPR050984">
    <property type="entry name" value="Gfo/Idh/MocA_domain"/>
</dbReference>
<dbReference type="InterPro" id="IPR055170">
    <property type="entry name" value="GFO_IDH_MocA-like_dom"/>
</dbReference>
<dbReference type="InterPro" id="IPR036291">
    <property type="entry name" value="NAD(P)-bd_dom_sf"/>
</dbReference>
<dbReference type="PANTHER" id="PTHR22604">
    <property type="entry name" value="OXIDOREDUCTASES"/>
    <property type="match status" value="1"/>
</dbReference>
<dbReference type="PANTHER" id="PTHR22604:SF105">
    <property type="entry name" value="TRANS-1,2-DIHYDROBENZENE-1,2-DIOL DEHYDROGENASE"/>
    <property type="match status" value="1"/>
</dbReference>
<dbReference type="Pfam" id="PF01408">
    <property type="entry name" value="GFO_IDH_MocA"/>
    <property type="match status" value="1"/>
</dbReference>
<dbReference type="Pfam" id="PF22725">
    <property type="entry name" value="GFO_IDH_MocA_C3"/>
    <property type="match status" value="1"/>
</dbReference>
<dbReference type="SUPFAM" id="SSF55347">
    <property type="entry name" value="Glyceraldehyde-3-phosphate dehydrogenase-like, C-terminal domain"/>
    <property type="match status" value="1"/>
</dbReference>
<dbReference type="SUPFAM" id="SSF51735">
    <property type="entry name" value="NAD(P)-binding Rossmann-fold domains"/>
    <property type="match status" value="1"/>
</dbReference>
<evidence type="ECO:0000250" key="1">
    <source>
        <dbReference type="UniProtKB" id="B3TMR8"/>
    </source>
</evidence>
<evidence type="ECO:0000269" key="2">
    <source>
    </source>
</evidence>
<evidence type="ECO:0000269" key="3">
    <source>
    </source>
</evidence>
<evidence type="ECO:0000303" key="4">
    <source>
    </source>
</evidence>
<evidence type="ECO:0000303" key="5">
    <source>
    </source>
</evidence>
<evidence type="ECO:0000305" key="6"/>
<accession>Q9ALN5</accession>
<proteinExistence type="evidence at protein level"/>
<gene>
    <name evidence="4" type="primary">spnN</name>
</gene>
<protein>
    <recommendedName>
        <fullName evidence="5">dTDP-3,4-didehydro-2,6-dideoxy-alpha-D-glucose 3-reductase</fullName>
        <ecNumber evidence="3">1.1.1.384</ecNumber>
    </recommendedName>
    <alternativeName>
        <fullName evidence="5">dTDP-3,4-diketo-2,6-dideoxy-D-glucose 3-ketoreductase</fullName>
    </alternativeName>
</protein>
<organism>
    <name type="scientific">Saccharopolyspora spinosa</name>
    <dbReference type="NCBI Taxonomy" id="60894"/>
    <lineage>
        <taxon>Bacteria</taxon>
        <taxon>Bacillati</taxon>
        <taxon>Actinomycetota</taxon>
        <taxon>Actinomycetes</taxon>
        <taxon>Pseudonocardiales</taxon>
        <taxon>Pseudonocardiaceae</taxon>
        <taxon>Saccharopolyspora</taxon>
    </lineage>
</organism>
<reference key="1">
    <citation type="journal article" date="2001" name="Chem. Biol.">
        <title>Cloning and analysis of the spinosad biosynthetic gene cluster of Saccharopolyspora spinosa.</title>
        <authorList>
            <person name="Waldron C."/>
            <person name="Matsushima P."/>
            <person name="Rosteck P.R. Jr."/>
            <person name="Broughton M.C."/>
            <person name="Turner J."/>
            <person name="Madduri K."/>
            <person name="Crawford K.P."/>
            <person name="Merlo D.J."/>
            <person name="Baltz R.H."/>
        </authorList>
    </citation>
    <scope>NUCLEOTIDE SEQUENCE [GENOMIC DNA]</scope>
    <scope>FUNCTION</scope>
    <scope>DISRUPTION PHENOTYPE</scope>
</reference>
<reference key="2">
    <citation type="journal article" date="2008" name="J. Am. Chem. Soc.">
        <title>In vitro characterization of the enzymes involved in TDP-D-forosamine biosynthesis in the spinosyn pathway of Saccharopolyspora spinosa.</title>
        <authorList>
            <person name="Hong L."/>
            <person name="Zhao Z."/>
            <person name="Melancon C.E. III"/>
            <person name="Zhang H."/>
            <person name="Liu H.W."/>
        </authorList>
    </citation>
    <scope>FUNCTION</scope>
    <scope>CATALYTIC ACTIVITY</scope>
    <scope>SUBSTRATE SPECIFICITY</scope>
    <scope>SUBUNIT</scope>
    <source>
        <strain>NRRL 18537</strain>
    </source>
</reference>